<feature type="chain" id="PRO_0000073363" description="ATP synthase gamma chain">
    <location>
        <begin position="1"/>
        <end position="288"/>
    </location>
</feature>
<reference key="1">
    <citation type="journal article" date="2004" name="J. Bacteriol.">
        <title>Complete genome sequence of Rickettsia typhi and comparison with sequences of other Rickettsiae.</title>
        <authorList>
            <person name="McLeod M.P."/>
            <person name="Qin X."/>
            <person name="Karpathy S.E."/>
            <person name="Gioia J."/>
            <person name="Highlander S.K."/>
            <person name="Fox G.E."/>
            <person name="McNeill T.Z."/>
            <person name="Jiang H."/>
            <person name="Muzny D."/>
            <person name="Jacob L.S."/>
            <person name="Hawes A.C."/>
            <person name="Sodergren E."/>
            <person name="Gill R."/>
            <person name="Hume J."/>
            <person name="Morgan M."/>
            <person name="Fan G."/>
            <person name="Amin A.G."/>
            <person name="Gibbs R.A."/>
            <person name="Hong C."/>
            <person name="Yu X.-J."/>
            <person name="Walker D.H."/>
            <person name="Weinstock G.M."/>
        </authorList>
    </citation>
    <scope>NUCLEOTIDE SEQUENCE [LARGE SCALE GENOMIC DNA]</scope>
    <source>
        <strain>ATCC VR-144 / Wilmington</strain>
    </source>
</reference>
<proteinExistence type="inferred from homology"/>
<evidence type="ECO:0000255" key="1">
    <source>
        <dbReference type="HAMAP-Rule" id="MF_00815"/>
    </source>
</evidence>
<organism>
    <name type="scientific">Rickettsia typhi (strain ATCC VR-144 / Wilmington)</name>
    <dbReference type="NCBI Taxonomy" id="257363"/>
    <lineage>
        <taxon>Bacteria</taxon>
        <taxon>Pseudomonadati</taxon>
        <taxon>Pseudomonadota</taxon>
        <taxon>Alphaproteobacteria</taxon>
        <taxon>Rickettsiales</taxon>
        <taxon>Rickettsiaceae</taxon>
        <taxon>Rickettsieae</taxon>
        <taxon>Rickettsia</taxon>
        <taxon>typhus group</taxon>
    </lineage>
</organism>
<dbReference type="EMBL" id="AE017197">
    <property type="protein sequence ID" value="AAU04245.1"/>
    <property type="molecule type" value="Genomic_DNA"/>
</dbReference>
<dbReference type="RefSeq" id="WP_011191220.1">
    <property type="nucleotide sequence ID" value="NC_006142.1"/>
</dbReference>
<dbReference type="SMR" id="Q68VU7"/>
<dbReference type="KEGG" id="rty:RT0789"/>
<dbReference type="eggNOG" id="COG0224">
    <property type="taxonomic scope" value="Bacteria"/>
</dbReference>
<dbReference type="HOGENOM" id="CLU_050669_0_1_5"/>
<dbReference type="OrthoDB" id="9812769at2"/>
<dbReference type="Proteomes" id="UP000000604">
    <property type="component" value="Chromosome"/>
</dbReference>
<dbReference type="GO" id="GO:0005886">
    <property type="term" value="C:plasma membrane"/>
    <property type="evidence" value="ECO:0007669"/>
    <property type="project" value="UniProtKB-SubCell"/>
</dbReference>
<dbReference type="GO" id="GO:0045259">
    <property type="term" value="C:proton-transporting ATP synthase complex"/>
    <property type="evidence" value="ECO:0007669"/>
    <property type="project" value="UniProtKB-KW"/>
</dbReference>
<dbReference type="GO" id="GO:0005524">
    <property type="term" value="F:ATP binding"/>
    <property type="evidence" value="ECO:0007669"/>
    <property type="project" value="UniProtKB-UniRule"/>
</dbReference>
<dbReference type="GO" id="GO:0046933">
    <property type="term" value="F:proton-transporting ATP synthase activity, rotational mechanism"/>
    <property type="evidence" value="ECO:0007669"/>
    <property type="project" value="UniProtKB-UniRule"/>
</dbReference>
<dbReference type="GO" id="GO:0042777">
    <property type="term" value="P:proton motive force-driven plasma membrane ATP synthesis"/>
    <property type="evidence" value="ECO:0007669"/>
    <property type="project" value="UniProtKB-UniRule"/>
</dbReference>
<dbReference type="CDD" id="cd12151">
    <property type="entry name" value="F1-ATPase_gamma"/>
    <property type="match status" value="1"/>
</dbReference>
<dbReference type="Gene3D" id="3.40.1380.10">
    <property type="match status" value="1"/>
</dbReference>
<dbReference type="Gene3D" id="1.10.287.80">
    <property type="entry name" value="ATP synthase, gamma subunit, helix hairpin domain"/>
    <property type="match status" value="1"/>
</dbReference>
<dbReference type="HAMAP" id="MF_00815">
    <property type="entry name" value="ATP_synth_gamma_bact"/>
    <property type="match status" value="1"/>
</dbReference>
<dbReference type="InterPro" id="IPR035968">
    <property type="entry name" value="ATP_synth_F1_ATPase_gsu"/>
</dbReference>
<dbReference type="InterPro" id="IPR000131">
    <property type="entry name" value="ATP_synth_F1_gsu"/>
</dbReference>
<dbReference type="InterPro" id="IPR023632">
    <property type="entry name" value="ATP_synth_F1_gsu_CS"/>
</dbReference>
<dbReference type="NCBIfam" id="TIGR01146">
    <property type="entry name" value="ATPsyn_F1gamma"/>
    <property type="match status" value="1"/>
</dbReference>
<dbReference type="PANTHER" id="PTHR11693">
    <property type="entry name" value="ATP SYNTHASE GAMMA CHAIN"/>
    <property type="match status" value="1"/>
</dbReference>
<dbReference type="PANTHER" id="PTHR11693:SF22">
    <property type="entry name" value="ATP SYNTHASE SUBUNIT GAMMA, MITOCHONDRIAL"/>
    <property type="match status" value="1"/>
</dbReference>
<dbReference type="Pfam" id="PF00231">
    <property type="entry name" value="ATP-synt"/>
    <property type="match status" value="1"/>
</dbReference>
<dbReference type="PRINTS" id="PR00126">
    <property type="entry name" value="ATPASEGAMMA"/>
</dbReference>
<dbReference type="SUPFAM" id="SSF52943">
    <property type="entry name" value="ATP synthase (F1-ATPase), gamma subunit"/>
    <property type="match status" value="1"/>
</dbReference>
<dbReference type="PROSITE" id="PS00153">
    <property type="entry name" value="ATPASE_GAMMA"/>
    <property type="match status" value="1"/>
</dbReference>
<keyword id="KW-0066">ATP synthesis</keyword>
<keyword id="KW-0997">Cell inner membrane</keyword>
<keyword id="KW-1003">Cell membrane</keyword>
<keyword id="KW-0139">CF(1)</keyword>
<keyword id="KW-0375">Hydrogen ion transport</keyword>
<keyword id="KW-0406">Ion transport</keyword>
<keyword id="KW-0472">Membrane</keyword>
<keyword id="KW-0813">Transport</keyword>
<name>ATPG_RICTY</name>
<gene>
    <name evidence="1" type="primary">atpG</name>
    <name type="ordered locus">RT0789</name>
</gene>
<protein>
    <recommendedName>
        <fullName evidence="1">ATP synthase gamma chain</fullName>
    </recommendedName>
    <alternativeName>
        <fullName evidence="1">ATP synthase F1 sector gamma subunit</fullName>
    </alternativeName>
    <alternativeName>
        <fullName evidence="1">F-ATPase gamma subunit</fullName>
    </alternativeName>
</protein>
<comment type="function">
    <text evidence="1">Produces ATP from ADP in the presence of a proton gradient across the membrane. The gamma chain is believed to be important in regulating ATPase activity and the flow of protons through the CF(0) complex.</text>
</comment>
<comment type="subunit">
    <text evidence="1">F-type ATPases have 2 components, CF(1) - the catalytic core - and CF(0) - the membrane proton channel. CF(1) has five subunits: alpha(3), beta(3), gamma(1), delta(1), epsilon(1). CF(0) has three main subunits: a, b and c.</text>
</comment>
<comment type="subcellular location">
    <subcellularLocation>
        <location evidence="1">Cell inner membrane</location>
        <topology evidence="1">Peripheral membrane protein</topology>
    </subcellularLocation>
</comment>
<comment type="similarity">
    <text evidence="1">Belongs to the ATPase gamma chain family.</text>
</comment>
<accession>Q68VU7</accession>
<sequence length="288" mass="33169">MSNLKQLRTRIKSVKSTQKITKAMQLVSASKMTKIKTQIANSNFYIEAINKMMSNIFSMTLCELSIEEQKFFNTMPSKANLLIVMTSERGLCGMFNYSIIKQVKNDIKELANKGEQIKLIIIGKKGYEVLKRQYANYIDSYFEFPKSHYANLILQLKEKIMYAVENLEISNCIIYFNKFKNAMTQILTKQKILPIEKHRDYSVVENYHFEYEGKNLISNLINLYLYAKINYALLQNIVSEEGARMTAMDSATNNANDLISKLVLKLNRSRQTIITTELIEIIAGAEAV</sequence>